<organism>
    <name type="scientific">Chlorokybus atmophyticus</name>
    <name type="common">Soil alga</name>
    <dbReference type="NCBI Taxonomy" id="3144"/>
    <lineage>
        <taxon>Eukaryota</taxon>
        <taxon>Viridiplantae</taxon>
        <taxon>Streptophyta</taxon>
        <taxon>Chlorokybophyceae</taxon>
        <taxon>Chlorokybales</taxon>
        <taxon>Chlorokybaceae</taxon>
        <taxon>Chlorokybus</taxon>
    </lineage>
</organism>
<evidence type="ECO:0000255" key="1">
    <source>
        <dbReference type="HAMAP-Rule" id="MF_01456"/>
    </source>
</evidence>
<geneLocation type="chloroplast"/>
<protein>
    <recommendedName>
        <fullName evidence="1">NAD(P)H-quinone oxidoreductase subunit 4L, chloroplastic</fullName>
        <ecNumber evidence="1">7.1.1.-</ecNumber>
    </recommendedName>
    <alternativeName>
        <fullName evidence="1">NAD(P)H dehydrogenase subunit 4L</fullName>
    </alternativeName>
    <alternativeName>
        <fullName evidence="1">NADH-plastoquinone oxidoreductase subunit 4L</fullName>
    </alternativeName>
</protein>
<feature type="chain" id="PRO_0000360316" description="NAD(P)H-quinone oxidoreductase subunit 4L, chloroplastic">
    <location>
        <begin position="1"/>
        <end position="101"/>
    </location>
</feature>
<feature type="transmembrane region" description="Helical" evidence="1">
    <location>
        <begin position="2"/>
        <end position="22"/>
    </location>
</feature>
<feature type="transmembrane region" description="Helical" evidence="1">
    <location>
        <begin position="32"/>
        <end position="52"/>
    </location>
</feature>
<feature type="transmembrane region" description="Helical" evidence="1">
    <location>
        <begin position="64"/>
        <end position="84"/>
    </location>
</feature>
<reference key="1">
    <citation type="journal article" date="2007" name="BMC Biol.">
        <title>A clade uniting the green algae Mesostigma viride and Chlorokybus atmophyticus represents the deepest branch of the Streptophyta in chloroplast genome-based phylogenies.</title>
        <authorList>
            <person name="Lemieux C."/>
            <person name="Otis C."/>
            <person name="Turmel M."/>
        </authorList>
    </citation>
    <scope>NUCLEOTIDE SEQUENCE [LARGE SCALE GENOMIC DNA]</scope>
    <source>
        <strain>SAG 48.80</strain>
    </source>
</reference>
<accession>Q19V55</accession>
<sequence length="101" mass="11089">MILDSLLILAASVFCIGIYGLITSRNVVRILMSLELLLNAVNINFVAFSNFIDSIEIKGQVISIFIMTIAAAEAAVGLALILAIYRNRDTVDIESFNLLKR</sequence>
<dbReference type="EC" id="7.1.1.-" evidence="1"/>
<dbReference type="EMBL" id="DQ422812">
    <property type="protein sequence ID" value="ABD62193.2"/>
    <property type="molecule type" value="Genomic_DNA"/>
</dbReference>
<dbReference type="RefSeq" id="YP_001019165.1">
    <property type="nucleotide sequence ID" value="NC_008822.1"/>
</dbReference>
<dbReference type="SMR" id="Q19V55"/>
<dbReference type="GeneID" id="4783210"/>
<dbReference type="GO" id="GO:0009535">
    <property type="term" value="C:chloroplast thylakoid membrane"/>
    <property type="evidence" value="ECO:0007669"/>
    <property type="project" value="UniProtKB-SubCell"/>
</dbReference>
<dbReference type="GO" id="GO:0030964">
    <property type="term" value="C:NADH dehydrogenase complex"/>
    <property type="evidence" value="ECO:0007669"/>
    <property type="project" value="TreeGrafter"/>
</dbReference>
<dbReference type="GO" id="GO:0016655">
    <property type="term" value="F:oxidoreductase activity, acting on NAD(P)H, quinone or similar compound as acceptor"/>
    <property type="evidence" value="ECO:0007669"/>
    <property type="project" value="UniProtKB-UniRule"/>
</dbReference>
<dbReference type="GO" id="GO:0048038">
    <property type="term" value="F:quinone binding"/>
    <property type="evidence" value="ECO:0007669"/>
    <property type="project" value="UniProtKB-KW"/>
</dbReference>
<dbReference type="GO" id="GO:0042773">
    <property type="term" value="P:ATP synthesis coupled electron transport"/>
    <property type="evidence" value="ECO:0007669"/>
    <property type="project" value="InterPro"/>
</dbReference>
<dbReference type="GO" id="GO:0019684">
    <property type="term" value="P:photosynthesis, light reaction"/>
    <property type="evidence" value="ECO:0007669"/>
    <property type="project" value="UniProtKB-UniRule"/>
</dbReference>
<dbReference type="FunFam" id="1.10.287.3510:FF:000001">
    <property type="entry name" value="NADH-quinone oxidoreductase subunit K"/>
    <property type="match status" value="1"/>
</dbReference>
<dbReference type="Gene3D" id="1.10.287.3510">
    <property type="match status" value="1"/>
</dbReference>
<dbReference type="HAMAP" id="MF_01456">
    <property type="entry name" value="NDH1_NuoK"/>
    <property type="match status" value="1"/>
</dbReference>
<dbReference type="InterPro" id="IPR001133">
    <property type="entry name" value="NADH_UbQ_OxRdtase_chain4L/K"/>
</dbReference>
<dbReference type="InterPro" id="IPR039428">
    <property type="entry name" value="NUOK/Mnh_C1-like"/>
</dbReference>
<dbReference type="NCBIfam" id="NF004320">
    <property type="entry name" value="PRK05715.1-2"/>
    <property type="match status" value="1"/>
</dbReference>
<dbReference type="NCBIfam" id="NF004321">
    <property type="entry name" value="PRK05715.1-3"/>
    <property type="match status" value="1"/>
</dbReference>
<dbReference type="NCBIfam" id="NF004322">
    <property type="entry name" value="PRK05715.1-4"/>
    <property type="match status" value="1"/>
</dbReference>
<dbReference type="NCBIfam" id="NF004323">
    <property type="entry name" value="PRK05715.1-5"/>
    <property type="match status" value="1"/>
</dbReference>
<dbReference type="PANTHER" id="PTHR11434:SF16">
    <property type="entry name" value="NADH-UBIQUINONE OXIDOREDUCTASE CHAIN 4L"/>
    <property type="match status" value="1"/>
</dbReference>
<dbReference type="PANTHER" id="PTHR11434">
    <property type="entry name" value="NADH-UBIQUINONE OXIDOREDUCTASE SUBUNIT ND4L"/>
    <property type="match status" value="1"/>
</dbReference>
<dbReference type="Pfam" id="PF00420">
    <property type="entry name" value="Oxidored_q2"/>
    <property type="match status" value="1"/>
</dbReference>
<gene>
    <name evidence="1" type="primary">ndhE</name>
</gene>
<proteinExistence type="inferred from homology"/>
<comment type="function">
    <text evidence="1">NDH shuttles electrons from NAD(P)H:plastoquinone, via FMN and iron-sulfur (Fe-S) centers, to quinones in the photosynthetic chain and possibly in a chloroplast respiratory chain. The immediate electron acceptor for the enzyme in this species is believed to be plastoquinone. Couples the redox reaction to proton translocation, and thus conserves the redox energy in a proton gradient.</text>
</comment>
<comment type="catalytic activity">
    <reaction evidence="1">
        <text>a plastoquinone + NADH + (n+1) H(+)(in) = a plastoquinol + NAD(+) + n H(+)(out)</text>
        <dbReference type="Rhea" id="RHEA:42608"/>
        <dbReference type="Rhea" id="RHEA-COMP:9561"/>
        <dbReference type="Rhea" id="RHEA-COMP:9562"/>
        <dbReference type="ChEBI" id="CHEBI:15378"/>
        <dbReference type="ChEBI" id="CHEBI:17757"/>
        <dbReference type="ChEBI" id="CHEBI:57540"/>
        <dbReference type="ChEBI" id="CHEBI:57945"/>
        <dbReference type="ChEBI" id="CHEBI:62192"/>
    </reaction>
</comment>
<comment type="catalytic activity">
    <reaction evidence="1">
        <text>a plastoquinone + NADPH + (n+1) H(+)(in) = a plastoquinol + NADP(+) + n H(+)(out)</text>
        <dbReference type="Rhea" id="RHEA:42612"/>
        <dbReference type="Rhea" id="RHEA-COMP:9561"/>
        <dbReference type="Rhea" id="RHEA-COMP:9562"/>
        <dbReference type="ChEBI" id="CHEBI:15378"/>
        <dbReference type="ChEBI" id="CHEBI:17757"/>
        <dbReference type="ChEBI" id="CHEBI:57783"/>
        <dbReference type="ChEBI" id="CHEBI:58349"/>
        <dbReference type="ChEBI" id="CHEBI:62192"/>
    </reaction>
</comment>
<comment type="subunit">
    <text evidence="1">NDH is composed of at least 16 different subunits, 5 of which are encoded in the nucleus.</text>
</comment>
<comment type="subcellular location">
    <subcellularLocation>
        <location evidence="1">Plastid</location>
        <location evidence="1">Chloroplast thylakoid membrane</location>
        <topology evidence="1">Multi-pass membrane protein</topology>
    </subcellularLocation>
</comment>
<comment type="similarity">
    <text evidence="1">Belongs to the complex I subunit 4L family.</text>
</comment>
<name>NU4LC_CHLAT</name>
<keyword id="KW-0150">Chloroplast</keyword>
<keyword id="KW-0472">Membrane</keyword>
<keyword id="KW-0520">NAD</keyword>
<keyword id="KW-0521">NADP</keyword>
<keyword id="KW-0934">Plastid</keyword>
<keyword id="KW-0618">Plastoquinone</keyword>
<keyword id="KW-0874">Quinone</keyword>
<keyword id="KW-0793">Thylakoid</keyword>
<keyword id="KW-1278">Translocase</keyword>
<keyword id="KW-0812">Transmembrane</keyword>
<keyword id="KW-1133">Transmembrane helix</keyword>
<keyword id="KW-0813">Transport</keyword>